<organism>
    <name type="scientific">Granulibacter bethesdensis (strain ATCC BAA-1260 / CGDNIH1)</name>
    <dbReference type="NCBI Taxonomy" id="391165"/>
    <lineage>
        <taxon>Bacteria</taxon>
        <taxon>Pseudomonadati</taxon>
        <taxon>Pseudomonadota</taxon>
        <taxon>Alphaproteobacteria</taxon>
        <taxon>Acetobacterales</taxon>
        <taxon>Acetobacteraceae</taxon>
        <taxon>Granulibacter</taxon>
    </lineage>
</organism>
<gene>
    <name evidence="1" type="primary">trpA</name>
    <name type="ordered locus">GbCGDNIH1_2014</name>
</gene>
<dbReference type="EC" id="4.2.1.20" evidence="1"/>
<dbReference type="EMBL" id="CP000394">
    <property type="protein sequence ID" value="ABI62912.1"/>
    <property type="molecule type" value="Genomic_DNA"/>
</dbReference>
<dbReference type="RefSeq" id="WP_011632714.1">
    <property type="nucleotide sequence ID" value="NC_008343.2"/>
</dbReference>
<dbReference type="SMR" id="Q0BQJ0"/>
<dbReference type="STRING" id="391165.GbCGDNIH1_2014"/>
<dbReference type="KEGG" id="gbe:GbCGDNIH1_2014"/>
<dbReference type="eggNOG" id="COG0159">
    <property type="taxonomic scope" value="Bacteria"/>
</dbReference>
<dbReference type="HOGENOM" id="CLU_016734_0_4_5"/>
<dbReference type="OrthoDB" id="9804578at2"/>
<dbReference type="UniPathway" id="UPA00035">
    <property type="reaction ID" value="UER00044"/>
</dbReference>
<dbReference type="Proteomes" id="UP000001963">
    <property type="component" value="Chromosome"/>
</dbReference>
<dbReference type="GO" id="GO:0005829">
    <property type="term" value="C:cytosol"/>
    <property type="evidence" value="ECO:0007669"/>
    <property type="project" value="TreeGrafter"/>
</dbReference>
<dbReference type="GO" id="GO:0004834">
    <property type="term" value="F:tryptophan synthase activity"/>
    <property type="evidence" value="ECO:0007669"/>
    <property type="project" value="UniProtKB-UniRule"/>
</dbReference>
<dbReference type="CDD" id="cd04724">
    <property type="entry name" value="Tryptophan_synthase_alpha"/>
    <property type="match status" value="1"/>
</dbReference>
<dbReference type="FunFam" id="3.20.20.70:FF:000037">
    <property type="entry name" value="Tryptophan synthase alpha chain"/>
    <property type="match status" value="1"/>
</dbReference>
<dbReference type="Gene3D" id="3.20.20.70">
    <property type="entry name" value="Aldolase class I"/>
    <property type="match status" value="1"/>
</dbReference>
<dbReference type="HAMAP" id="MF_00131">
    <property type="entry name" value="Trp_synth_alpha"/>
    <property type="match status" value="1"/>
</dbReference>
<dbReference type="InterPro" id="IPR013785">
    <property type="entry name" value="Aldolase_TIM"/>
</dbReference>
<dbReference type="InterPro" id="IPR011060">
    <property type="entry name" value="RibuloseP-bd_barrel"/>
</dbReference>
<dbReference type="InterPro" id="IPR018204">
    <property type="entry name" value="Trp_synthase_alpha_AS"/>
</dbReference>
<dbReference type="InterPro" id="IPR002028">
    <property type="entry name" value="Trp_synthase_suA"/>
</dbReference>
<dbReference type="NCBIfam" id="TIGR00262">
    <property type="entry name" value="trpA"/>
    <property type="match status" value="1"/>
</dbReference>
<dbReference type="PANTHER" id="PTHR43406:SF1">
    <property type="entry name" value="TRYPTOPHAN SYNTHASE ALPHA CHAIN, CHLOROPLASTIC"/>
    <property type="match status" value="1"/>
</dbReference>
<dbReference type="PANTHER" id="PTHR43406">
    <property type="entry name" value="TRYPTOPHAN SYNTHASE, ALPHA CHAIN"/>
    <property type="match status" value="1"/>
</dbReference>
<dbReference type="Pfam" id="PF00290">
    <property type="entry name" value="Trp_syntA"/>
    <property type="match status" value="1"/>
</dbReference>
<dbReference type="SUPFAM" id="SSF51366">
    <property type="entry name" value="Ribulose-phoshate binding barrel"/>
    <property type="match status" value="1"/>
</dbReference>
<dbReference type="PROSITE" id="PS00167">
    <property type="entry name" value="TRP_SYNTHASE_ALPHA"/>
    <property type="match status" value="1"/>
</dbReference>
<keyword id="KW-0028">Amino-acid biosynthesis</keyword>
<keyword id="KW-0057">Aromatic amino acid biosynthesis</keyword>
<keyword id="KW-0456">Lyase</keyword>
<keyword id="KW-1185">Reference proteome</keyword>
<keyword id="KW-0822">Tryptophan biosynthesis</keyword>
<protein>
    <recommendedName>
        <fullName evidence="1">Tryptophan synthase alpha chain</fullName>
        <ecNumber evidence="1">4.2.1.20</ecNumber>
    </recommendedName>
</protein>
<accession>Q0BQJ0</accession>
<feature type="chain" id="PRO_1000018209" description="Tryptophan synthase alpha chain">
    <location>
        <begin position="1"/>
        <end position="278"/>
    </location>
</feature>
<feature type="active site" description="Proton acceptor" evidence="1">
    <location>
        <position position="49"/>
    </location>
</feature>
<feature type="active site" description="Proton acceptor" evidence="1">
    <location>
        <position position="60"/>
    </location>
</feature>
<evidence type="ECO:0000255" key="1">
    <source>
        <dbReference type="HAMAP-Rule" id="MF_00131"/>
    </source>
</evidence>
<comment type="function">
    <text evidence="1">The alpha subunit is responsible for the aldol cleavage of indoleglycerol phosphate to indole and glyceraldehyde 3-phosphate.</text>
</comment>
<comment type="catalytic activity">
    <reaction evidence="1">
        <text>(1S,2R)-1-C-(indol-3-yl)glycerol 3-phosphate + L-serine = D-glyceraldehyde 3-phosphate + L-tryptophan + H2O</text>
        <dbReference type="Rhea" id="RHEA:10532"/>
        <dbReference type="ChEBI" id="CHEBI:15377"/>
        <dbReference type="ChEBI" id="CHEBI:33384"/>
        <dbReference type="ChEBI" id="CHEBI:57912"/>
        <dbReference type="ChEBI" id="CHEBI:58866"/>
        <dbReference type="ChEBI" id="CHEBI:59776"/>
        <dbReference type="EC" id="4.2.1.20"/>
    </reaction>
</comment>
<comment type="pathway">
    <text evidence="1">Amino-acid biosynthesis; L-tryptophan biosynthesis; L-tryptophan from chorismate: step 5/5.</text>
</comment>
<comment type="subunit">
    <text evidence="1">Tetramer of two alpha and two beta chains.</text>
</comment>
<comment type="similarity">
    <text evidence="1">Belongs to the TrpA family.</text>
</comment>
<sequence>MSRIQTRFAALKREGRGALIPFIEAGDPDAETSQTLLHGLPAAGADLIEIGVPFTDPMADGPTIQRAGRRALEAGATLAKTLAMVETFRQQDKDTPIILMGYLNPIETYGHERFCVDAAAVGVDGLIIVDLPTEEADLILPFATANGLDVIRLVAPTTDDARLPHVLNGSSGFVYYVSITGITGTVTASAEQLAQNMPRLRRVTDLPVAIGFGIRNPAQAAEAVRQGDAAIVASALIDTLAETLDDGRATDRTVPAVLDQVRQLAEAVRSARLSARGA</sequence>
<name>TRPA_GRABC</name>
<reference key="1">
    <citation type="journal article" date="2007" name="J. Bacteriol.">
        <title>Genome sequence analysis of the emerging human pathogenic acetic acid bacterium Granulibacter bethesdensis.</title>
        <authorList>
            <person name="Greenberg D.E."/>
            <person name="Porcella S.F."/>
            <person name="Zelazny A.M."/>
            <person name="Virtaneva K."/>
            <person name="Sturdevant D.E."/>
            <person name="Kupko J.J. III"/>
            <person name="Barbian K.D."/>
            <person name="Babar A."/>
            <person name="Dorward D.W."/>
            <person name="Holland S.M."/>
        </authorList>
    </citation>
    <scope>NUCLEOTIDE SEQUENCE [LARGE SCALE GENOMIC DNA]</scope>
    <source>
        <strain>ATCC BAA-1260 / CGDNIH1</strain>
    </source>
</reference>
<proteinExistence type="inferred from homology"/>